<reference key="1">
    <citation type="submission" date="2006-12" db="EMBL/GenBank/DDBJ databases">
        <title>Bifidobacterium adolescentis complete genome sequence.</title>
        <authorList>
            <person name="Suzuki T."/>
            <person name="Tsuda Y."/>
            <person name="Kanou N."/>
            <person name="Inoue T."/>
            <person name="Kumazaki K."/>
            <person name="Nagano S."/>
            <person name="Hirai S."/>
            <person name="Tanaka K."/>
            <person name="Watanabe K."/>
        </authorList>
    </citation>
    <scope>NUCLEOTIDE SEQUENCE [LARGE SCALE GENOMIC DNA]</scope>
    <source>
        <strain>ATCC 15703 / DSM 20083 / NCTC 11814 / E194a</strain>
    </source>
</reference>
<comment type="function">
    <text evidence="1">May play a role in DNA repair. It seems to be involved in an RecBC-independent recombinational process of DNA repair. It may act with RecF and RecO.</text>
</comment>
<comment type="similarity">
    <text evidence="1">Belongs to the RecR family.</text>
</comment>
<accession>A0ZZN6</accession>
<sequence length="200" mass="21754">MALAYDGAIQRLIDAFANLPGIGPKGAQRIAFYLLNAPDEESQALIDAITEVKEKVRFCDICGNVCETSPCPVCADPRRDHSVICVVEEPKDVMSIERTREYRGMYHVLGGVINPMANVQPSDLNIAKLIERLKDSEVKEVILALNPNVEGEATTSFLSQLLSQTDIKVTRLASGLPVGGDLEYADEITLGRALAGRRAV</sequence>
<gene>
    <name evidence="1" type="primary">recR</name>
    <name type="ordered locus">BAD_0138</name>
</gene>
<name>RECR_BIFAA</name>
<organism>
    <name type="scientific">Bifidobacterium adolescentis (strain ATCC 15703 / DSM 20083 / NCTC 11814 / E194a)</name>
    <dbReference type="NCBI Taxonomy" id="367928"/>
    <lineage>
        <taxon>Bacteria</taxon>
        <taxon>Bacillati</taxon>
        <taxon>Actinomycetota</taxon>
        <taxon>Actinomycetes</taxon>
        <taxon>Bifidobacteriales</taxon>
        <taxon>Bifidobacteriaceae</taxon>
        <taxon>Bifidobacterium</taxon>
    </lineage>
</organism>
<evidence type="ECO:0000255" key="1">
    <source>
        <dbReference type="HAMAP-Rule" id="MF_00017"/>
    </source>
</evidence>
<protein>
    <recommendedName>
        <fullName evidence="1">Recombination protein RecR</fullName>
    </recommendedName>
</protein>
<dbReference type="EMBL" id="AP009256">
    <property type="protein sequence ID" value="BAF38919.1"/>
    <property type="molecule type" value="Genomic_DNA"/>
</dbReference>
<dbReference type="RefSeq" id="WP_011742676.1">
    <property type="nucleotide sequence ID" value="NC_008618.1"/>
</dbReference>
<dbReference type="SMR" id="A0ZZN6"/>
<dbReference type="STRING" id="367928.BAD_0138"/>
<dbReference type="PaxDb" id="1680-BADO_0148"/>
<dbReference type="GeneID" id="4556631"/>
<dbReference type="KEGG" id="bad:BAD_0138"/>
<dbReference type="HOGENOM" id="CLU_060739_1_0_11"/>
<dbReference type="Proteomes" id="UP000008702">
    <property type="component" value="Chromosome"/>
</dbReference>
<dbReference type="GO" id="GO:0003677">
    <property type="term" value="F:DNA binding"/>
    <property type="evidence" value="ECO:0007669"/>
    <property type="project" value="UniProtKB-UniRule"/>
</dbReference>
<dbReference type="GO" id="GO:0008270">
    <property type="term" value="F:zinc ion binding"/>
    <property type="evidence" value="ECO:0007669"/>
    <property type="project" value="UniProtKB-KW"/>
</dbReference>
<dbReference type="GO" id="GO:0006310">
    <property type="term" value="P:DNA recombination"/>
    <property type="evidence" value="ECO:0007669"/>
    <property type="project" value="UniProtKB-UniRule"/>
</dbReference>
<dbReference type="GO" id="GO:0006281">
    <property type="term" value="P:DNA repair"/>
    <property type="evidence" value="ECO:0007669"/>
    <property type="project" value="UniProtKB-UniRule"/>
</dbReference>
<dbReference type="CDD" id="cd01025">
    <property type="entry name" value="TOPRIM_recR"/>
    <property type="match status" value="1"/>
</dbReference>
<dbReference type="Gene3D" id="3.40.1360.10">
    <property type="match status" value="1"/>
</dbReference>
<dbReference type="Gene3D" id="6.10.250.240">
    <property type="match status" value="1"/>
</dbReference>
<dbReference type="Gene3D" id="1.10.8.420">
    <property type="entry name" value="RecR Domain 1"/>
    <property type="match status" value="1"/>
</dbReference>
<dbReference type="HAMAP" id="MF_00017">
    <property type="entry name" value="RecR"/>
    <property type="match status" value="1"/>
</dbReference>
<dbReference type="InterPro" id="IPR000093">
    <property type="entry name" value="DNA_Rcmb_RecR"/>
</dbReference>
<dbReference type="InterPro" id="IPR023627">
    <property type="entry name" value="Rcmb_RecR"/>
</dbReference>
<dbReference type="InterPro" id="IPR015967">
    <property type="entry name" value="Rcmb_RecR_Znf"/>
</dbReference>
<dbReference type="InterPro" id="IPR006171">
    <property type="entry name" value="TOPRIM_dom"/>
</dbReference>
<dbReference type="InterPro" id="IPR034137">
    <property type="entry name" value="TOPRIM_RecR"/>
</dbReference>
<dbReference type="NCBIfam" id="TIGR00615">
    <property type="entry name" value="recR"/>
    <property type="match status" value="1"/>
</dbReference>
<dbReference type="PANTHER" id="PTHR30446">
    <property type="entry name" value="RECOMBINATION PROTEIN RECR"/>
    <property type="match status" value="1"/>
</dbReference>
<dbReference type="PANTHER" id="PTHR30446:SF0">
    <property type="entry name" value="RECOMBINATION PROTEIN RECR"/>
    <property type="match status" value="1"/>
</dbReference>
<dbReference type="Pfam" id="PF21175">
    <property type="entry name" value="RecR_C"/>
    <property type="match status" value="1"/>
</dbReference>
<dbReference type="Pfam" id="PF21176">
    <property type="entry name" value="RecR_HhH"/>
    <property type="match status" value="1"/>
</dbReference>
<dbReference type="Pfam" id="PF02132">
    <property type="entry name" value="RecR_ZnF"/>
    <property type="match status" value="1"/>
</dbReference>
<dbReference type="Pfam" id="PF13662">
    <property type="entry name" value="Toprim_4"/>
    <property type="match status" value="1"/>
</dbReference>
<dbReference type="SMART" id="SM00493">
    <property type="entry name" value="TOPRIM"/>
    <property type="match status" value="1"/>
</dbReference>
<dbReference type="SUPFAM" id="SSF111304">
    <property type="entry name" value="Recombination protein RecR"/>
    <property type="match status" value="1"/>
</dbReference>
<dbReference type="PROSITE" id="PS01300">
    <property type="entry name" value="RECR"/>
    <property type="match status" value="1"/>
</dbReference>
<dbReference type="PROSITE" id="PS50880">
    <property type="entry name" value="TOPRIM"/>
    <property type="match status" value="1"/>
</dbReference>
<feature type="chain" id="PRO_1000001512" description="Recombination protein RecR">
    <location>
        <begin position="1"/>
        <end position="200"/>
    </location>
</feature>
<feature type="domain" description="Toprim" evidence="1">
    <location>
        <begin position="82"/>
        <end position="177"/>
    </location>
</feature>
<feature type="zinc finger region" description="C4-type" evidence="1">
    <location>
        <begin position="59"/>
        <end position="74"/>
    </location>
</feature>
<proteinExistence type="inferred from homology"/>
<keyword id="KW-0227">DNA damage</keyword>
<keyword id="KW-0233">DNA recombination</keyword>
<keyword id="KW-0234">DNA repair</keyword>
<keyword id="KW-0479">Metal-binding</keyword>
<keyword id="KW-1185">Reference proteome</keyword>
<keyword id="KW-0862">Zinc</keyword>
<keyword id="KW-0863">Zinc-finger</keyword>